<feature type="chain" id="PRO_1000192843" description="Phosphoglycerate kinase">
    <location>
        <begin position="1"/>
        <end position="397"/>
    </location>
</feature>
<feature type="binding site" evidence="1">
    <location>
        <begin position="21"/>
        <end position="23"/>
    </location>
    <ligand>
        <name>substrate</name>
    </ligand>
</feature>
<feature type="binding site" evidence="1">
    <location>
        <position position="36"/>
    </location>
    <ligand>
        <name>substrate</name>
    </ligand>
</feature>
<feature type="binding site" evidence="1">
    <location>
        <begin position="59"/>
        <end position="62"/>
    </location>
    <ligand>
        <name>substrate</name>
    </ligand>
</feature>
<feature type="binding site" evidence="1">
    <location>
        <position position="119"/>
    </location>
    <ligand>
        <name>substrate</name>
    </ligand>
</feature>
<feature type="binding site" evidence="1">
    <location>
        <position position="152"/>
    </location>
    <ligand>
        <name>substrate</name>
    </ligand>
</feature>
<feature type="binding site" evidence="1">
    <location>
        <position position="202"/>
    </location>
    <ligand>
        <name>ATP</name>
        <dbReference type="ChEBI" id="CHEBI:30616"/>
    </ligand>
</feature>
<feature type="binding site" evidence="1">
    <location>
        <position position="324"/>
    </location>
    <ligand>
        <name>ATP</name>
        <dbReference type="ChEBI" id="CHEBI:30616"/>
    </ligand>
</feature>
<feature type="binding site" evidence="1">
    <location>
        <begin position="354"/>
        <end position="357"/>
    </location>
    <ligand>
        <name>ATP</name>
        <dbReference type="ChEBI" id="CHEBI:30616"/>
    </ligand>
</feature>
<organism>
    <name type="scientific">Cereibacter sphaeroides (strain KD131 / KCTC 12085)</name>
    <name type="common">Rhodobacter sphaeroides</name>
    <dbReference type="NCBI Taxonomy" id="557760"/>
    <lineage>
        <taxon>Bacteria</taxon>
        <taxon>Pseudomonadati</taxon>
        <taxon>Pseudomonadota</taxon>
        <taxon>Alphaproteobacteria</taxon>
        <taxon>Rhodobacterales</taxon>
        <taxon>Paracoccaceae</taxon>
        <taxon>Cereibacter</taxon>
    </lineage>
</organism>
<gene>
    <name evidence="1" type="primary">pgk</name>
    <name type="ordered locus">RSKD131_0804</name>
</gene>
<sequence>MGWKTLDDMDLAGKVVLVRVDVNVPMENGEVTDATRIEKIVPTVEDILKKGGKPVLLAHFGRPKGKVVEEMSLRLVLPALQKALPGTKVSFAADCVGPEPEQAVAAMLEGEVLLLENTRFHAGEEKNDPELAAAMAKLGQVYVNDAFSAAHRAHASTEGLARLLPSAAGRLMEAELKALEAALGHPERPVVAVVGGAKVSTKLDLLGNLVGRVDHLVIGGGMANTFLVAQGIEVGKSLAERDMADTAREILSKAKAAGCTIHLPLDVVVAREFKAGAANETVETSACPADAMILDAGPKTVAALSEVFASAKTLIWNGPLGAFEIEPFDAATNAAALQVAQLTKAGQLISVAGGGDTVAALNKAGAAEGFSYISTAGGAFLEWMEGKELPGVAALTV</sequence>
<evidence type="ECO:0000255" key="1">
    <source>
        <dbReference type="HAMAP-Rule" id="MF_00145"/>
    </source>
</evidence>
<proteinExistence type="inferred from homology"/>
<keyword id="KW-0067">ATP-binding</keyword>
<keyword id="KW-0963">Cytoplasm</keyword>
<keyword id="KW-0324">Glycolysis</keyword>
<keyword id="KW-0418">Kinase</keyword>
<keyword id="KW-0547">Nucleotide-binding</keyword>
<keyword id="KW-0808">Transferase</keyword>
<comment type="catalytic activity">
    <reaction evidence="1">
        <text>(2R)-3-phosphoglycerate + ATP = (2R)-3-phospho-glyceroyl phosphate + ADP</text>
        <dbReference type="Rhea" id="RHEA:14801"/>
        <dbReference type="ChEBI" id="CHEBI:30616"/>
        <dbReference type="ChEBI" id="CHEBI:57604"/>
        <dbReference type="ChEBI" id="CHEBI:58272"/>
        <dbReference type="ChEBI" id="CHEBI:456216"/>
        <dbReference type="EC" id="2.7.2.3"/>
    </reaction>
</comment>
<comment type="pathway">
    <text evidence="1">Carbohydrate degradation; glycolysis; pyruvate from D-glyceraldehyde 3-phosphate: step 2/5.</text>
</comment>
<comment type="subunit">
    <text evidence="1">Monomer.</text>
</comment>
<comment type="subcellular location">
    <subcellularLocation>
        <location evidence="1">Cytoplasm</location>
    </subcellularLocation>
</comment>
<comment type="similarity">
    <text evidence="1">Belongs to the phosphoglycerate kinase family.</text>
</comment>
<dbReference type="EC" id="2.7.2.3" evidence="1"/>
<dbReference type="EMBL" id="CP001150">
    <property type="protein sequence ID" value="ACM00664.1"/>
    <property type="molecule type" value="Genomic_DNA"/>
</dbReference>
<dbReference type="RefSeq" id="WP_012643973.1">
    <property type="nucleotide sequence ID" value="NC_011963.1"/>
</dbReference>
<dbReference type="SMR" id="B9KQT7"/>
<dbReference type="GeneID" id="67446247"/>
<dbReference type="KEGG" id="rsk:RSKD131_0804"/>
<dbReference type="HOGENOM" id="CLU_025427_0_2_5"/>
<dbReference type="UniPathway" id="UPA00109">
    <property type="reaction ID" value="UER00185"/>
</dbReference>
<dbReference type="GO" id="GO:0005829">
    <property type="term" value="C:cytosol"/>
    <property type="evidence" value="ECO:0007669"/>
    <property type="project" value="TreeGrafter"/>
</dbReference>
<dbReference type="GO" id="GO:0043531">
    <property type="term" value="F:ADP binding"/>
    <property type="evidence" value="ECO:0007669"/>
    <property type="project" value="TreeGrafter"/>
</dbReference>
<dbReference type="GO" id="GO:0005524">
    <property type="term" value="F:ATP binding"/>
    <property type="evidence" value="ECO:0007669"/>
    <property type="project" value="UniProtKB-KW"/>
</dbReference>
<dbReference type="GO" id="GO:0004618">
    <property type="term" value="F:phosphoglycerate kinase activity"/>
    <property type="evidence" value="ECO:0007669"/>
    <property type="project" value="UniProtKB-UniRule"/>
</dbReference>
<dbReference type="GO" id="GO:0006094">
    <property type="term" value="P:gluconeogenesis"/>
    <property type="evidence" value="ECO:0007669"/>
    <property type="project" value="TreeGrafter"/>
</dbReference>
<dbReference type="GO" id="GO:0006096">
    <property type="term" value="P:glycolytic process"/>
    <property type="evidence" value="ECO:0007669"/>
    <property type="project" value="UniProtKB-UniRule"/>
</dbReference>
<dbReference type="FunFam" id="3.40.50.1260:FF:000006">
    <property type="entry name" value="Phosphoglycerate kinase"/>
    <property type="match status" value="1"/>
</dbReference>
<dbReference type="FunFam" id="3.40.50.1260:FF:000031">
    <property type="entry name" value="Phosphoglycerate kinase 1"/>
    <property type="match status" value="1"/>
</dbReference>
<dbReference type="Gene3D" id="3.40.50.1260">
    <property type="entry name" value="Phosphoglycerate kinase, N-terminal domain"/>
    <property type="match status" value="2"/>
</dbReference>
<dbReference type="HAMAP" id="MF_00145">
    <property type="entry name" value="Phosphoglyc_kinase"/>
    <property type="match status" value="1"/>
</dbReference>
<dbReference type="InterPro" id="IPR001576">
    <property type="entry name" value="Phosphoglycerate_kinase"/>
</dbReference>
<dbReference type="InterPro" id="IPR015911">
    <property type="entry name" value="Phosphoglycerate_kinase_CS"/>
</dbReference>
<dbReference type="InterPro" id="IPR015824">
    <property type="entry name" value="Phosphoglycerate_kinase_N"/>
</dbReference>
<dbReference type="InterPro" id="IPR036043">
    <property type="entry name" value="Phosphoglycerate_kinase_sf"/>
</dbReference>
<dbReference type="PANTHER" id="PTHR11406">
    <property type="entry name" value="PHOSPHOGLYCERATE KINASE"/>
    <property type="match status" value="1"/>
</dbReference>
<dbReference type="PANTHER" id="PTHR11406:SF23">
    <property type="entry name" value="PHOSPHOGLYCERATE KINASE 1, CHLOROPLASTIC-RELATED"/>
    <property type="match status" value="1"/>
</dbReference>
<dbReference type="Pfam" id="PF00162">
    <property type="entry name" value="PGK"/>
    <property type="match status" value="1"/>
</dbReference>
<dbReference type="PIRSF" id="PIRSF000724">
    <property type="entry name" value="Pgk"/>
    <property type="match status" value="1"/>
</dbReference>
<dbReference type="PRINTS" id="PR00477">
    <property type="entry name" value="PHGLYCKINASE"/>
</dbReference>
<dbReference type="SUPFAM" id="SSF53748">
    <property type="entry name" value="Phosphoglycerate kinase"/>
    <property type="match status" value="1"/>
</dbReference>
<dbReference type="PROSITE" id="PS00111">
    <property type="entry name" value="PGLYCERATE_KINASE"/>
    <property type="match status" value="1"/>
</dbReference>
<reference key="1">
    <citation type="journal article" date="2009" name="J. Bacteriol.">
        <title>Complete genome sequence of Rhodobacter sphaeroides KD131.</title>
        <authorList>
            <person name="Lim S.-K."/>
            <person name="Kim S.J."/>
            <person name="Cha S.H."/>
            <person name="Oh Y.-K."/>
            <person name="Rhee H.-J."/>
            <person name="Kim M.-S."/>
            <person name="Lee J.K."/>
        </authorList>
    </citation>
    <scope>NUCLEOTIDE SEQUENCE [LARGE SCALE GENOMIC DNA]</scope>
    <source>
        <strain>KD131 / KCTC 12085</strain>
    </source>
</reference>
<protein>
    <recommendedName>
        <fullName evidence="1">Phosphoglycerate kinase</fullName>
        <ecNumber evidence="1">2.7.2.3</ecNumber>
    </recommendedName>
</protein>
<accession>B9KQT7</accession>
<name>PGK_CERSK</name>